<proteinExistence type="evidence at protein level"/>
<comment type="subcellular location">
    <subcellularLocation>
        <location evidence="1">Host membrane</location>
        <topology evidence="1">Peripheral membrane protein</topology>
    </subcellularLocation>
</comment>
<comment type="PTM">
    <text evidence="1">Phosphorylated by host.</text>
</comment>
<comment type="similarity">
    <text evidence="2">Belongs to the varicellovirus ORF2 protein family.</text>
</comment>
<keyword id="KW-1043">Host membrane</keyword>
<keyword id="KW-0472">Membrane</keyword>
<keyword id="KW-0597">Phosphoprotein</keyword>
<sequence length="238" mass="25984">MHVISETLAYGHVPAFIMGSTLVRPSLNATAEENPASETRCLLRVLAGRTVDLPGGGTLHITCTKTYVIIGKYSKPGERLSLARLIGRAMTPGGARTFIILAMKEKRSTTLGYECGTGLHLLAPSMGTFLRTHGLSNRDLCLWRGNIYDMHMQRLMFWENIAQNTTETPCITSTLTCNLTEDSGEAALTTSDRPTLPTLTAQGRPTVSNIRGILKGSPRQQPVCHRVRFAEPTEGVLM</sequence>
<feature type="chain" id="PRO_0000385144" description="Membrane protein 2">
    <location>
        <begin position="1"/>
        <end position="238"/>
    </location>
</feature>
<evidence type="ECO:0000269" key="1">
    <source>
    </source>
</evidence>
<evidence type="ECO:0000305" key="2"/>
<reference key="1">
    <citation type="journal article" date="2002" name="J. Virol.">
        <title>Comparison of the complete DNA sequences of the Oka varicella vaccine and its parental virus.</title>
        <authorList>
            <person name="Gomi Y."/>
            <person name="Sunamachi H."/>
            <person name="Mori Y."/>
            <person name="Nagaike K."/>
            <person name="Takahashi M."/>
            <person name="Yamanishi K."/>
        </authorList>
    </citation>
    <scope>NUCLEOTIDE SEQUENCE [LARGE SCALE GENOMIC DNA]</scope>
    <source>
        <strain>Isolate Human/Japan/P-Oka/1970</strain>
        <strain>Oka varicella vaccine Biken (V-Oka-Biken)</strain>
    </source>
</reference>
<reference key="2">
    <citation type="journal article" date="2008" name="J. Virol.">
        <title>Complete DNA sequences of two oka strain varicella-zoster virus genomes.</title>
        <authorList>
            <person name="Tillieux S.L."/>
            <person name="Halsey W.S."/>
            <person name="Thomas E.S."/>
            <person name="Voycik J.J."/>
            <person name="Sathe G.M."/>
            <person name="Vassilev V."/>
        </authorList>
    </citation>
    <scope>NUCLEOTIDE SEQUENCE [LARGE SCALE GENOMIC DNA]</scope>
    <source>
        <strain>Oka varicella vaccine VarilRix (V-Oka-GSK)</strain>
        <strain>Oka varicella vaccine Varivax (V-Oka-Merck)</strain>
    </source>
</reference>
<reference key="3">
    <citation type="journal article" date="2002" name="J. Virol.">
        <title>Varicella-zoster virus open reading frame 2 encodes a membrane phosphoprotein that is dispensable for viral replication and for establishment of latency.</title>
        <authorList>
            <person name="Sato H."/>
            <person name="Pesnicak L."/>
            <person name="Cohen J.I."/>
        </authorList>
    </citation>
    <scope>PHOSPHORYLATION</scope>
    <scope>SUBCELLULAR LOCATION</scope>
</reference>
<dbReference type="EMBL" id="AB097932">
    <property type="status" value="NOT_ANNOTATED_CDS"/>
    <property type="molecule type" value="Genomic_DNA"/>
</dbReference>
<dbReference type="EMBL" id="AB097933">
    <property type="status" value="NOT_ANNOTATED_CDS"/>
    <property type="molecule type" value="Genomic_DNA"/>
</dbReference>
<dbReference type="EMBL" id="DQ008354">
    <property type="protein sequence ID" value="AAY57621.1"/>
    <property type="molecule type" value="Genomic_DNA"/>
</dbReference>
<dbReference type="EMBL" id="DQ008355">
    <property type="protein sequence ID" value="AAY57692.1"/>
    <property type="molecule type" value="Genomic_DNA"/>
</dbReference>
<dbReference type="IntAct" id="Q4JQX3">
    <property type="interactions" value="2"/>
</dbReference>
<dbReference type="Proteomes" id="UP000002603">
    <property type="component" value="Genome"/>
</dbReference>
<dbReference type="Proteomes" id="UP000008504">
    <property type="component" value="Genome"/>
</dbReference>
<dbReference type="Proteomes" id="UP000008505">
    <property type="component" value="Genome"/>
</dbReference>
<dbReference type="Proteomes" id="UP000008506">
    <property type="component" value="Genome"/>
</dbReference>
<dbReference type="GO" id="GO:0033644">
    <property type="term" value="C:host cell membrane"/>
    <property type="evidence" value="ECO:0007669"/>
    <property type="project" value="UniProtKB-SubCell"/>
</dbReference>
<dbReference type="GO" id="GO:0016020">
    <property type="term" value="C:membrane"/>
    <property type="evidence" value="ECO:0007669"/>
    <property type="project" value="UniProtKB-KW"/>
</dbReference>
<dbReference type="InterPro" id="IPR010741">
    <property type="entry name" value="DUF1314"/>
</dbReference>
<dbReference type="Pfam" id="PF07013">
    <property type="entry name" value="DUF1314"/>
    <property type="match status" value="1"/>
</dbReference>
<accession>Q4JQX3</accession>
<organism>
    <name type="scientific">Varicella-zoster virus (strain Oka vaccine)</name>
    <name type="common">HHV-3</name>
    <name type="synonym">Human herpesvirus 3</name>
    <dbReference type="NCBI Taxonomy" id="341980"/>
    <lineage>
        <taxon>Viruses</taxon>
        <taxon>Duplodnaviria</taxon>
        <taxon>Heunggongvirae</taxon>
        <taxon>Peploviricota</taxon>
        <taxon>Herviviricetes</taxon>
        <taxon>Herpesvirales</taxon>
        <taxon>Orthoherpesviridae</taxon>
        <taxon>Alphaherpesvirinae</taxon>
        <taxon>Varicellovirus</taxon>
        <taxon>Varicellovirus humanalpha3</taxon>
        <taxon>Human herpesvirus 3</taxon>
    </lineage>
</organism>
<organismHost>
    <name type="scientific">Homo sapiens</name>
    <name type="common">Human</name>
    <dbReference type="NCBI Taxonomy" id="9606"/>
</organismHost>
<name>ORF2_VZVO</name>
<gene>
    <name type="ORF">ORF2</name>
</gene>
<protein>
    <recommendedName>
        <fullName>Membrane protein 2</fullName>
    </recommendedName>
    <alternativeName>
        <fullName>Membrane ORF2 protein</fullName>
    </alternativeName>
</protein>